<proteinExistence type="evidence at transcript level"/>
<dbReference type="EC" id="1.1.1.-"/>
<dbReference type="EMBL" id="BC123279">
    <property type="protein sequence ID" value="AAI23280.1"/>
    <property type="molecule type" value="mRNA"/>
</dbReference>
<dbReference type="RefSeq" id="NP_001090495.1">
    <property type="nucleotide sequence ID" value="NM_001097026.1"/>
</dbReference>
<dbReference type="SMR" id="Q0IH73"/>
<dbReference type="DNASU" id="779408"/>
<dbReference type="GeneID" id="779408"/>
<dbReference type="KEGG" id="xla:779408"/>
<dbReference type="AGR" id="Xenbase:XB-GENE-985968"/>
<dbReference type="CTD" id="779408"/>
<dbReference type="Xenbase" id="XB-GENE-985968">
    <property type="gene designation" value="sdr42e1.L"/>
</dbReference>
<dbReference type="OrthoDB" id="2735536at2759"/>
<dbReference type="Proteomes" id="UP000186698">
    <property type="component" value="Chromosome 4L"/>
</dbReference>
<dbReference type="Bgee" id="779408">
    <property type="expression patterns" value="Expressed in blastula and 19 other cell types or tissues"/>
</dbReference>
<dbReference type="GO" id="GO:0016020">
    <property type="term" value="C:membrane"/>
    <property type="evidence" value="ECO:0007669"/>
    <property type="project" value="UniProtKB-SubCell"/>
</dbReference>
<dbReference type="GO" id="GO:0016616">
    <property type="term" value="F:oxidoreductase activity, acting on the CH-OH group of donors, NAD or NADP as acceptor"/>
    <property type="evidence" value="ECO:0000318"/>
    <property type="project" value="GO_Central"/>
</dbReference>
<dbReference type="GO" id="GO:0006694">
    <property type="term" value="P:steroid biosynthetic process"/>
    <property type="evidence" value="ECO:0007669"/>
    <property type="project" value="InterPro"/>
</dbReference>
<dbReference type="CDD" id="cd09812">
    <property type="entry name" value="3b-HSD_like_1_SDR_e"/>
    <property type="match status" value="1"/>
</dbReference>
<dbReference type="FunFam" id="3.40.50.720:FF:000138">
    <property type="entry name" value="Short-chain dehydrogenase/reductase family 42E member 1"/>
    <property type="match status" value="1"/>
</dbReference>
<dbReference type="Gene3D" id="3.40.50.720">
    <property type="entry name" value="NAD(P)-binding Rossmann-like Domain"/>
    <property type="match status" value="1"/>
</dbReference>
<dbReference type="InterPro" id="IPR002225">
    <property type="entry name" value="3Beta_OHSteriod_DH/Estase"/>
</dbReference>
<dbReference type="InterPro" id="IPR050177">
    <property type="entry name" value="Lipid_A_modif_metabolic_enz"/>
</dbReference>
<dbReference type="InterPro" id="IPR036291">
    <property type="entry name" value="NAD(P)-bd_dom_sf"/>
</dbReference>
<dbReference type="PANTHER" id="PTHR43245">
    <property type="entry name" value="BIFUNCTIONAL POLYMYXIN RESISTANCE PROTEIN ARNA"/>
    <property type="match status" value="1"/>
</dbReference>
<dbReference type="PANTHER" id="PTHR43245:SF51">
    <property type="entry name" value="SHORT CHAIN DEHYDROGENASE_REDUCTASE FAMILY 42E, MEMBER 2"/>
    <property type="match status" value="1"/>
</dbReference>
<dbReference type="Pfam" id="PF01073">
    <property type="entry name" value="3Beta_HSD"/>
    <property type="match status" value="1"/>
</dbReference>
<dbReference type="SUPFAM" id="SSF51735">
    <property type="entry name" value="NAD(P)-binding Rossmann-fold domains"/>
    <property type="match status" value="1"/>
</dbReference>
<protein>
    <recommendedName>
        <fullName evidence="2">Short-chain dehydrogenase/reductase family 42E member 1</fullName>
        <ecNumber>1.1.1.-</ecNumber>
    </recommendedName>
</protein>
<evidence type="ECO:0000250" key="1"/>
<evidence type="ECO:0000250" key="2">
    <source>
        <dbReference type="UniProtKB" id="Q8WUS8"/>
    </source>
</evidence>
<evidence type="ECO:0000255" key="3"/>
<evidence type="ECO:0000305" key="4"/>
<keyword id="KW-0472">Membrane</keyword>
<keyword id="KW-0520">NAD</keyword>
<keyword id="KW-0560">Oxidoreductase</keyword>
<keyword id="KW-1185">Reference proteome</keyword>
<keyword id="KW-0812">Transmembrane</keyword>
<keyword id="KW-1133">Transmembrane helix</keyword>
<reference key="1">
    <citation type="submission" date="2006-09" db="EMBL/GenBank/DDBJ databases">
        <authorList>
            <consortium name="NIH - Xenopus Gene Collection (XGC) project"/>
        </authorList>
    </citation>
    <scope>NUCLEOTIDE SEQUENCE [LARGE SCALE MRNA]</scope>
    <source>
        <tissue>Embryo</tissue>
    </source>
</reference>
<feature type="chain" id="PRO_0000331759" description="Short-chain dehydrogenase/reductase family 42E member 1">
    <location>
        <begin position="1"/>
        <end position="386"/>
    </location>
</feature>
<feature type="transmembrane region" description="Helical" evidence="3">
    <location>
        <begin position="279"/>
        <end position="299"/>
    </location>
</feature>
<feature type="transmembrane region" description="Helical" evidence="3">
    <location>
        <begin position="363"/>
        <end position="383"/>
    </location>
</feature>
<feature type="active site" description="Proton acceptor" evidence="1">
    <location>
        <position position="150"/>
    </location>
</feature>
<feature type="binding site" evidence="1">
    <location>
        <position position="154"/>
    </location>
    <ligand>
        <name>NAD(+)</name>
        <dbReference type="ChEBI" id="CHEBI:57540"/>
    </ligand>
</feature>
<comment type="subcellular location">
    <subcellularLocation>
        <location evidence="4">Membrane</location>
        <topology evidence="4">Multi-pass membrane protein</topology>
    </subcellularLocation>
</comment>
<comment type="similarity">
    <text evidence="4">Belongs to the 3-beta-HSD family.</text>
</comment>
<organism>
    <name type="scientific">Xenopus laevis</name>
    <name type="common">African clawed frog</name>
    <dbReference type="NCBI Taxonomy" id="8355"/>
    <lineage>
        <taxon>Eukaryota</taxon>
        <taxon>Metazoa</taxon>
        <taxon>Chordata</taxon>
        <taxon>Craniata</taxon>
        <taxon>Vertebrata</taxon>
        <taxon>Euteleostomi</taxon>
        <taxon>Amphibia</taxon>
        <taxon>Batrachia</taxon>
        <taxon>Anura</taxon>
        <taxon>Pipoidea</taxon>
        <taxon>Pipidae</taxon>
        <taxon>Xenopodinae</taxon>
        <taxon>Xenopus</taxon>
        <taxon>Xenopus</taxon>
    </lineage>
</organism>
<name>D42E1_XENLA</name>
<sequence>MSSSQRAKETVVITGGGGYFGHRLGCTLHEKGVHVILFDIRKPDQELPEGIHFVQGDVRSLSQLEDVVAGASCVFHTASYGMSGKEQLHRQKIEAINVRGTENIIQACINTNVPRLVYTSTFNVIFGGQTIRDGDESLPYLPQDAFVDNYSRTKTVAEMFVLKMNNQELKNNSGFLRTCSLRAAGIYGPGEQRHLPRIISALEKGMFLFVYGDNPLVQFVHVDNLISAHILAAEALTSEKKYIAAGQPYFISDGPPVNNFEFFRPLVEGLGYKFPSLRFPLSLVYFFAFLTEWIHFFISPVCDFQPILTRAEVFKTGVTHYFKIEKATRELGFEPQPFTMQDVAEWFKNHGYGKQDKKIKSNYLIWDIIFILLVTVVLLSWLPSSE</sequence>
<gene>
    <name type="primary">sdr42e1</name>
</gene>
<accession>Q0IH73</accession>